<comment type="function">
    <text evidence="1">Non-catalytic component of the RNA exosome complex which has 3'-&gt;5' exoribonuclease activity and participates in a multitude of cellular RNA processing and degradation events. In the nucleus, the RNA exosome complex is involved in proper maturation of stable RNA species such as rRNA, snRNA and snoRNA, in the elimination of RNA processing by-products and non-coding 'pervasive' transcripts, such as antisense RNA species and cryptic unstable transcripts (CUTs), and of mRNAs with processing defects, thereby limiting or excluding their export to the cytoplasm. In the cytoplasm, the RNA exosome complex is involved in general mRNA turnover and in RNA surveillance pathways, preventing translation of aberrant mRNAs. The catalytic inactive RNA exosome core complex of 9 subunits (Exo-9) is proposed to play a pivotal role in the binding and presentation of RNA for ribonucleolysis, and to serve as a scaffold for the association with catalytic subunits and accessory proteins or complexes (By similarity).</text>
</comment>
<comment type="subunit">
    <text evidence="1">Component of the RNA exosome complex. Specifically part of the catalytically inactive RNA exosome core complex (Exo-9) which may associate with the catalytic subunits rrp6 and dis3 in cytoplasmic- and nuclear-specific RNA exosome complex forms. Exo-9 is formed by a hexameric base ring of RNase PH domain-containing subunits and a cap ring consisting of csl4, rrp4 and rrp40.</text>
</comment>
<comment type="subcellular location">
    <subcellularLocation>
        <location evidence="3">Nucleus</location>
        <location evidence="3">Nucleolus</location>
    </subcellularLocation>
    <subcellularLocation>
        <location evidence="3">Cytoplasm</location>
    </subcellularLocation>
</comment>
<comment type="similarity">
    <text evidence="4">Belongs to the CSL4 family.</text>
</comment>
<gene>
    <name type="primary">csl4</name>
    <name type="ORF">SPCC1840.11</name>
    <name type="ORF">SPCC965.01</name>
</gene>
<protein>
    <recommendedName>
        <fullName>Exosome complex component csl4</fullName>
    </recommendedName>
</protein>
<evidence type="ECO:0000250" key="1">
    <source>
        <dbReference type="UniProtKB" id="P53859"/>
    </source>
</evidence>
<evidence type="ECO:0000255" key="2">
    <source>
        <dbReference type="PROSITE-ProRule" id="PRU00180"/>
    </source>
</evidence>
<evidence type="ECO:0000269" key="3">
    <source>
    </source>
</evidence>
<evidence type="ECO:0000305" key="4"/>
<organism>
    <name type="scientific">Schizosaccharomyces pombe (strain 972 / ATCC 24843)</name>
    <name type="common">Fission yeast</name>
    <dbReference type="NCBI Taxonomy" id="284812"/>
    <lineage>
        <taxon>Eukaryota</taxon>
        <taxon>Fungi</taxon>
        <taxon>Dikarya</taxon>
        <taxon>Ascomycota</taxon>
        <taxon>Taphrinomycotina</taxon>
        <taxon>Schizosaccharomycetes</taxon>
        <taxon>Schizosaccharomycetales</taxon>
        <taxon>Schizosaccharomycetaceae</taxon>
        <taxon>Schizosaccharomyces</taxon>
    </lineage>
</organism>
<proteinExistence type="inferred from homology"/>
<keyword id="KW-0963">Cytoplasm</keyword>
<keyword id="KW-0271">Exosome</keyword>
<keyword id="KW-0539">Nucleus</keyword>
<keyword id="KW-1185">Reference proteome</keyword>
<keyword id="KW-0694">RNA-binding</keyword>
<keyword id="KW-0698">rRNA processing</keyword>
<accession>O59821</accession>
<dbReference type="EMBL" id="CU329672">
    <property type="protein sequence ID" value="CAA20134.1"/>
    <property type="molecule type" value="Genomic_DNA"/>
</dbReference>
<dbReference type="PIR" id="T41179">
    <property type="entry name" value="T41179"/>
</dbReference>
<dbReference type="PIR" id="T41654">
    <property type="entry name" value="T41654"/>
</dbReference>
<dbReference type="RefSeq" id="NP_588510.1">
    <property type="nucleotide sequence ID" value="NM_001023500.2"/>
</dbReference>
<dbReference type="SMR" id="O59821"/>
<dbReference type="BioGRID" id="275917">
    <property type="interactions" value="10"/>
</dbReference>
<dbReference type="ComplexPortal" id="CPX-8914">
    <property type="entry name" value="Nucleolar exosome complex"/>
</dbReference>
<dbReference type="FunCoup" id="O59821">
    <property type="interactions" value="723"/>
</dbReference>
<dbReference type="STRING" id="284812.O59821"/>
<dbReference type="iPTMnet" id="O59821"/>
<dbReference type="PaxDb" id="4896-SPCC1840.11.1"/>
<dbReference type="EnsemblFungi" id="SPCC1840.11.1">
    <property type="protein sequence ID" value="SPCC1840.11.1:pep"/>
    <property type="gene ID" value="SPCC1840.11"/>
</dbReference>
<dbReference type="GeneID" id="2539351"/>
<dbReference type="KEGG" id="spo:2539351"/>
<dbReference type="PomBase" id="SPCC1840.11">
    <property type="gene designation" value="csl4"/>
</dbReference>
<dbReference type="VEuPathDB" id="FungiDB:SPCC1840.11"/>
<dbReference type="eggNOG" id="KOG3409">
    <property type="taxonomic scope" value="Eukaryota"/>
</dbReference>
<dbReference type="HOGENOM" id="CLU_067135_3_0_1"/>
<dbReference type="InParanoid" id="O59821"/>
<dbReference type="OMA" id="PMVPVGW"/>
<dbReference type="PhylomeDB" id="O59821"/>
<dbReference type="Reactome" id="R-SPO-429958">
    <property type="pathway name" value="mRNA decay by 3' to 5' exoribonuclease"/>
</dbReference>
<dbReference type="Reactome" id="R-SPO-6791226">
    <property type="pathway name" value="Major pathway of rRNA processing in the nucleolus and cytosol"/>
</dbReference>
<dbReference type="PRO" id="PR:O59821"/>
<dbReference type="Proteomes" id="UP000002485">
    <property type="component" value="Chromosome III"/>
</dbReference>
<dbReference type="GO" id="GO:0000785">
    <property type="term" value="C:chromatin"/>
    <property type="evidence" value="ECO:0000314"/>
    <property type="project" value="PomBase"/>
</dbReference>
<dbReference type="GO" id="GO:0005737">
    <property type="term" value="C:cytoplasm"/>
    <property type="evidence" value="ECO:0000318"/>
    <property type="project" value="GO_Central"/>
</dbReference>
<dbReference type="GO" id="GO:0000177">
    <property type="term" value="C:cytoplasmic exosome (RNase complex)"/>
    <property type="evidence" value="ECO:0000266"/>
    <property type="project" value="PomBase"/>
</dbReference>
<dbReference type="GO" id="GO:0005829">
    <property type="term" value="C:cytosol"/>
    <property type="evidence" value="ECO:0007005"/>
    <property type="project" value="PomBase"/>
</dbReference>
<dbReference type="GO" id="GO:0000178">
    <property type="term" value="C:exosome (RNase complex)"/>
    <property type="evidence" value="ECO:0000314"/>
    <property type="project" value="PomBase"/>
</dbReference>
<dbReference type="GO" id="GO:0000176">
    <property type="term" value="C:nuclear exosome (RNase complex)"/>
    <property type="evidence" value="ECO:0000269"/>
    <property type="project" value="PomBase"/>
</dbReference>
<dbReference type="GO" id="GO:0005730">
    <property type="term" value="C:nucleolus"/>
    <property type="evidence" value="ECO:0000266"/>
    <property type="project" value="PomBase"/>
</dbReference>
<dbReference type="GO" id="GO:0005634">
    <property type="term" value="C:nucleus"/>
    <property type="evidence" value="ECO:0007005"/>
    <property type="project" value="PomBase"/>
</dbReference>
<dbReference type="GO" id="GO:0003723">
    <property type="term" value="F:RNA binding"/>
    <property type="evidence" value="ECO:0000255"/>
    <property type="project" value="PomBase"/>
</dbReference>
<dbReference type="GO" id="GO:0000467">
    <property type="term" value="P:exonucleolytic trimming to generate mature 3'-end of 5.8S rRNA from tricistronic rRNA transcript (SSU-rRNA, 5.8S rRNA, LSU-rRNA)"/>
    <property type="evidence" value="ECO:0000266"/>
    <property type="project" value="PomBase"/>
</dbReference>
<dbReference type="GO" id="GO:0070651">
    <property type="term" value="P:nonfunctional rRNA decay"/>
    <property type="evidence" value="ECO:0000266"/>
    <property type="project" value="PomBase"/>
</dbReference>
<dbReference type="GO" id="GO:0071028">
    <property type="term" value="P:nuclear mRNA surveillance"/>
    <property type="evidence" value="ECO:0000304"/>
    <property type="project" value="PomBase"/>
</dbReference>
<dbReference type="GO" id="GO:0071042">
    <property type="term" value="P:nuclear polyadenylation-dependent mRNA catabolic process"/>
    <property type="evidence" value="ECO:0000266"/>
    <property type="project" value="PomBase"/>
</dbReference>
<dbReference type="GO" id="GO:0071035">
    <property type="term" value="P:nuclear polyadenylation-dependent rRNA catabolic process"/>
    <property type="evidence" value="ECO:0000266"/>
    <property type="project" value="PomBase"/>
</dbReference>
<dbReference type="GO" id="GO:0070478">
    <property type="term" value="P:nuclear-transcribed mRNA catabolic process, 3'-5' exonucleolytic nonsense-mediated decay"/>
    <property type="evidence" value="ECO:0000266"/>
    <property type="project" value="PomBase"/>
</dbReference>
<dbReference type="GO" id="GO:0070481">
    <property type="term" value="P:nuclear-transcribed mRNA catabolic process, non-stop decay"/>
    <property type="evidence" value="ECO:0000266"/>
    <property type="project" value="PomBase"/>
</dbReference>
<dbReference type="GO" id="GO:0071038">
    <property type="term" value="P:TRAMP-dependent tRNA surveillance pathway"/>
    <property type="evidence" value="ECO:0000266"/>
    <property type="project" value="PomBase"/>
</dbReference>
<dbReference type="CDD" id="cd05791">
    <property type="entry name" value="S1_CSL4"/>
    <property type="match status" value="1"/>
</dbReference>
<dbReference type="FunFam" id="2.40.50.140:FF:000198">
    <property type="entry name" value="Exosome complex component CSL4"/>
    <property type="match status" value="1"/>
</dbReference>
<dbReference type="Gene3D" id="2.40.50.100">
    <property type="match status" value="1"/>
</dbReference>
<dbReference type="Gene3D" id="2.40.50.140">
    <property type="entry name" value="Nucleic acid-binding proteins"/>
    <property type="match status" value="1"/>
</dbReference>
<dbReference type="InterPro" id="IPR039771">
    <property type="entry name" value="Csl4"/>
</dbReference>
<dbReference type="InterPro" id="IPR019495">
    <property type="entry name" value="EXOSC1_C"/>
</dbReference>
<dbReference type="InterPro" id="IPR012340">
    <property type="entry name" value="NA-bd_OB-fold"/>
</dbReference>
<dbReference type="InterPro" id="IPR003029">
    <property type="entry name" value="S1_domain"/>
</dbReference>
<dbReference type="PANTHER" id="PTHR12686">
    <property type="entry name" value="3'-5' EXORIBONUCLEASE CSL4-RELATED"/>
    <property type="match status" value="1"/>
</dbReference>
<dbReference type="PANTHER" id="PTHR12686:SF8">
    <property type="entry name" value="EXOSOME COMPLEX COMPONENT CSL4"/>
    <property type="match status" value="1"/>
</dbReference>
<dbReference type="Pfam" id="PF10447">
    <property type="entry name" value="EXOSC1"/>
    <property type="match status" value="2"/>
</dbReference>
<dbReference type="SMART" id="SM00316">
    <property type="entry name" value="S1"/>
    <property type="match status" value="1"/>
</dbReference>
<dbReference type="SUPFAM" id="SSF50249">
    <property type="entry name" value="Nucleic acid-binding proteins"/>
    <property type="match status" value="1"/>
</dbReference>
<dbReference type="PROSITE" id="PS50126">
    <property type="entry name" value="S1"/>
    <property type="match status" value="1"/>
</dbReference>
<name>CSL4_SCHPO</name>
<feature type="chain" id="PRO_0000079402" description="Exosome complex component csl4">
    <location>
        <begin position="1"/>
        <end position="181"/>
    </location>
</feature>
<feature type="domain" description="S1 motif" evidence="2">
    <location>
        <begin position="58"/>
        <end position="137"/>
    </location>
</feature>
<reference key="1">
    <citation type="journal article" date="2002" name="Nature">
        <title>The genome sequence of Schizosaccharomyces pombe.</title>
        <authorList>
            <person name="Wood V."/>
            <person name="Gwilliam R."/>
            <person name="Rajandream M.A."/>
            <person name="Lyne M.H."/>
            <person name="Lyne R."/>
            <person name="Stewart A."/>
            <person name="Sgouros J.G."/>
            <person name="Peat N."/>
            <person name="Hayles J."/>
            <person name="Baker S.G."/>
            <person name="Basham D."/>
            <person name="Bowman S."/>
            <person name="Brooks K."/>
            <person name="Brown D."/>
            <person name="Brown S."/>
            <person name="Chillingworth T."/>
            <person name="Churcher C.M."/>
            <person name="Collins M."/>
            <person name="Connor R."/>
            <person name="Cronin A."/>
            <person name="Davis P."/>
            <person name="Feltwell T."/>
            <person name="Fraser A."/>
            <person name="Gentles S."/>
            <person name="Goble A."/>
            <person name="Hamlin N."/>
            <person name="Harris D.E."/>
            <person name="Hidalgo J."/>
            <person name="Hodgson G."/>
            <person name="Holroyd S."/>
            <person name="Hornsby T."/>
            <person name="Howarth S."/>
            <person name="Huckle E.J."/>
            <person name="Hunt S."/>
            <person name="Jagels K."/>
            <person name="James K.D."/>
            <person name="Jones L."/>
            <person name="Jones M."/>
            <person name="Leather S."/>
            <person name="McDonald S."/>
            <person name="McLean J."/>
            <person name="Mooney P."/>
            <person name="Moule S."/>
            <person name="Mungall K.L."/>
            <person name="Murphy L.D."/>
            <person name="Niblett D."/>
            <person name="Odell C."/>
            <person name="Oliver K."/>
            <person name="O'Neil S."/>
            <person name="Pearson D."/>
            <person name="Quail M.A."/>
            <person name="Rabbinowitsch E."/>
            <person name="Rutherford K.M."/>
            <person name="Rutter S."/>
            <person name="Saunders D."/>
            <person name="Seeger K."/>
            <person name="Sharp S."/>
            <person name="Skelton J."/>
            <person name="Simmonds M.N."/>
            <person name="Squares R."/>
            <person name="Squares S."/>
            <person name="Stevens K."/>
            <person name="Taylor K."/>
            <person name="Taylor R.G."/>
            <person name="Tivey A."/>
            <person name="Walsh S.V."/>
            <person name="Warren T."/>
            <person name="Whitehead S."/>
            <person name="Woodward J.R."/>
            <person name="Volckaert G."/>
            <person name="Aert R."/>
            <person name="Robben J."/>
            <person name="Grymonprez B."/>
            <person name="Weltjens I."/>
            <person name="Vanstreels E."/>
            <person name="Rieger M."/>
            <person name="Schaefer M."/>
            <person name="Mueller-Auer S."/>
            <person name="Gabel C."/>
            <person name="Fuchs M."/>
            <person name="Duesterhoeft A."/>
            <person name="Fritzc C."/>
            <person name="Holzer E."/>
            <person name="Moestl D."/>
            <person name="Hilbert H."/>
            <person name="Borzym K."/>
            <person name="Langer I."/>
            <person name="Beck A."/>
            <person name="Lehrach H."/>
            <person name="Reinhardt R."/>
            <person name="Pohl T.M."/>
            <person name="Eger P."/>
            <person name="Zimmermann W."/>
            <person name="Wedler H."/>
            <person name="Wambutt R."/>
            <person name="Purnelle B."/>
            <person name="Goffeau A."/>
            <person name="Cadieu E."/>
            <person name="Dreano S."/>
            <person name="Gloux S."/>
            <person name="Lelaure V."/>
            <person name="Mottier S."/>
            <person name="Galibert F."/>
            <person name="Aves S.J."/>
            <person name="Xiang Z."/>
            <person name="Hunt C."/>
            <person name="Moore K."/>
            <person name="Hurst S.M."/>
            <person name="Lucas M."/>
            <person name="Rochet M."/>
            <person name="Gaillardin C."/>
            <person name="Tallada V.A."/>
            <person name="Garzon A."/>
            <person name="Thode G."/>
            <person name="Daga R.R."/>
            <person name="Cruzado L."/>
            <person name="Jimenez J."/>
            <person name="Sanchez M."/>
            <person name="del Rey F."/>
            <person name="Benito J."/>
            <person name="Dominguez A."/>
            <person name="Revuelta J.L."/>
            <person name="Moreno S."/>
            <person name="Armstrong J."/>
            <person name="Forsburg S.L."/>
            <person name="Cerutti L."/>
            <person name="Lowe T."/>
            <person name="McCombie W.R."/>
            <person name="Paulsen I."/>
            <person name="Potashkin J."/>
            <person name="Shpakovski G.V."/>
            <person name="Ussery D."/>
            <person name="Barrell B.G."/>
            <person name="Nurse P."/>
        </authorList>
    </citation>
    <scope>NUCLEOTIDE SEQUENCE [LARGE SCALE GENOMIC DNA]</scope>
    <source>
        <strain>972 / ATCC 24843</strain>
    </source>
</reference>
<reference key="2">
    <citation type="journal article" date="2006" name="Nat. Biotechnol.">
        <title>ORFeome cloning and global analysis of protein localization in the fission yeast Schizosaccharomyces pombe.</title>
        <authorList>
            <person name="Matsuyama A."/>
            <person name="Arai R."/>
            <person name="Yashiroda Y."/>
            <person name="Shirai A."/>
            <person name="Kamata A."/>
            <person name="Sekido S."/>
            <person name="Kobayashi Y."/>
            <person name="Hashimoto A."/>
            <person name="Hamamoto M."/>
            <person name="Hiraoka Y."/>
            <person name="Horinouchi S."/>
            <person name="Yoshida M."/>
        </authorList>
    </citation>
    <scope>SUBCELLULAR LOCATION [LARGE SCALE ANALYSIS]</scope>
</reference>
<sequence length="181" mass="19890">MNLVLPGQVVARGAPNGEGTVKRGDYIISTRTGIFDPEKNSVTYPRKVEETAVLPNVGSIVLARVSRINARQATVNISVVDDVCTKDEFQGVIHVQDIRATEKNKVKVQNSFRPGDIVRALVISLGDGSSYFLTTARNDLGVIFAQSSETGEQMFPVDYQHMQTKSGYTEMRKCAKPILDE</sequence>